<name>RPOA_STAA3</name>
<gene>
    <name evidence="1" type="primary">rpoA</name>
    <name type="ordered locus">SAUSA300_2178</name>
</gene>
<proteinExistence type="inferred from homology"/>
<feature type="chain" id="PRO_0000264552" description="DNA-directed RNA polymerase subunit alpha">
    <location>
        <begin position="1"/>
        <end position="314"/>
    </location>
</feature>
<feature type="region of interest" description="Alpha N-terminal domain (alpha-NTD)" evidence="1">
    <location>
        <begin position="1"/>
        <end position="228"/>
    </location>
</feature>
<feature type="region of interest" description="Alpha C-terminal domain (alpha-CTD)" evidence="1">
    <location>
        <begin position="245"/>
        <end position="314"/>
    </location>
</feature>
<evidence type="ECO:0000255" key="1">
    <source>
        <dbReference type="HAMAP-Rule" id="MF_00059"/>
    </source>
</evidence>
<keyword id="KW-0240">DNA-directed RNA polymerase</keyword>
<keyword id="KW-0548">Nucleotidyltransferase</keyword>
<keyword id="KW-0804">Transcription</keyword>
<keyword id="KW-0808">Transferase</keyword>
<organism>
    <name type="scientific">Staphylococcus aureus (strain USA300)</name>
    <dbReference type="NCBI Taxonomy" id="367830"/>
    <lineage>
        <taxon>Bacteria</taxon>
        <taxon>Bacillati</taxon>
        <taxon>Bacillota</taxon>
        <taxon>Bacilli</taxon>
        <taxon>Bacillales</taxon>
        <taxon>Staphylococcaceae</taxon>
        <taxon>Staphylococcus</taxon>
    </lineage>
</organism>
<reference key="1">
    <citation type="journal article" date="2006" name="Lancet">
        <title>Complete genome sequence of USA300, an epidemic clone of community-acquired meticillin-resistant Staphylococcus aureus.</title>
        <authorList>
            <person name="Diep B.A."/>
            <person name="Gill S.R."/>
            <person name="Chang R.F."/>
            <person name="Phan T.H."/>
            <person name="Chen J.H."/>
            <person name="Davidson M.G."/>
            <person name="Lin F."/>
            <person name="Lin J."/>
            <person name="Carleton H.A."/>
            <person name="Mongodin E.F."/>
            <person name="Sensabaugh G.F."/>
            <person name="Perdreau-Remington F."/>
        </authorList>
    </citation>
    <scope>NUCLEOTIDE SEQUENCE [LARGE SCALE GENOMIC DNA]</scope>
    <source>
        <strain>USA300</strain>
    </source>
</reference>
<protein>
    <recommendedName>
        <fullName evidence="1">DNA-directed RNA polymerase subunit alpha</fullName>
        <shortName evidence="1">RNAP subunit alpha</shortName>
        <ecNumber evidence="1">2.7.7.6</ecNumber>
    </recommendedName>
    <alternativeName>
        <fullName evidence="1">RNA polymerase subunit alpha</fullName>
    </alternativeName>
    <alternativeName>
        <fullName evidence="1">Transcriptase subunit alpha</fullName>
    </alternativeName>
</protein>
<dbReference type="EC" id="2.7.7.6" evidence="1"/>
<dbReference type="EMBL" id="CP000255">
    <property type="protein sequence ID" value="ABD22543.1"/>
    <property type="molecule type" value="Genomic_DNA"/>
</dbReference>
<dbReference type="RefSeq" id="WP_000569649.1">
    <property type="nucleotide sequence ID" value="NZ_CP027476.1"/>
</dbReference>
<dbReference type="SMR" id="Q2FER5"/>
<dbReference type="KEGG" id="saa:SAUSA300_2178"/>
<dbReference type="HOGENOM" id="CLU_053084_0_1_9"/>
<dbReference type="OMA" id="PIKNVKY"/>
<dbReference type="Proteomes" id="UP000001939">
    <property type="component" value="Chromosome"/>
</dbReference>
<dbReference type="GO" id="GO:0005737">
    <property type="term" value="C:cytoplasm"/>
    <property type="evidence" value="ECO:0007669"/>
    <property type="project" value="UniProtKB-ARBA"/>
</dbReference>
<dbReference type="GO" id="GO:0000428">
    <property type="term" value="C:DNA-directed RNA polymerase complex"/>
    <property type="evidence" value="ECO:0007669"/>
    <property type="project" value="UniProtKB-KW"/>
</dbReference>
<dbReference type="GO" id="GO:0003677">
    <property type="term" value="F:DNA binding"/>
    <property type="evidence" value="ECO:0007669"/>
    <property type="project" value="UniProtKB-UniRule"/>
</dbReference>
<dbReference type="GO" id="GO:0003899">
    <property type="term" value="F:DNA-directed RNA polymerase activity"/>
    <property type="evidence" value="ECO:0007669"/>
    <property type="project" value="UniProtKB-UniRule"/>
</dbReference>
<dbReference type="GO" id="GO:0046983">
    <property type="term" value="F:protein dimerization activity"/>
    <property type="evidence" value="ECO:0007669"/>
    <property type="project" value="InterPro"/>
</dbReference>
<dbReference type="GO" id="GO:0006351">
    <property type="term" value="P:DNA-templated transcription"/>
    <property type="evidence" value="ECO:0007669"/>
    <property type="project" value="UniProtKB-UniRule"/>
</dbReference>
<dbReference type="CDD" id="cd06928">
    <property type="entry name" value="RNAP_alpha_NTD"/>
    <property type="match status" value="1"/>
</dbReference>
<dbReference type="FunFam" id="1.10.150.20:FF:000001">
    <property type="entry name" value="DNA-directed RNA polymerase subunit alpha"/>
    <property type="match status" value="1"/>
</dbReference>
<dbReference type="FunFam" id="2.170.120.12:FF:000001">
    <property type="entry name" value="DNA-directed RNA polymerase subunit alpha"/>
    <property type="match status" value="1"/>
</dbReference>
<dbReference type="Gene3D" id="1.10.150.20">
    <property type="entry name" value="5' to 3' exonuclease, C-terminal subdomain"/>
    <property type="match status" value="1"/>
</dbReference>
<dbReference type="Gene3D" id="2.170.120.12">
    <property type="entry name" value="DNA-directed RNA polymerase, insert domain"/>
    <property type="match status" value="1"/>
</dbReference>
<dbReference type="Gene3D" id="3.30.1360.10">
    <property type="entry name" value="RNA polymerase, RBP11-like subunit"/>
    <property type="match status" value="1"/>
</dbReference>
<dbReference type="HAMAP" id="MF_00059">
    <property type="entry name" value="RNApol_bact_RpoA"/>
    <property type="match status" value="1"/>
</dbReference>
<dbReference type="InterPro" id="IPR011262">
    <property type="entry name" value="DNA-dir_RNA_pol_insert"/>
</dbReference>
<dbReference type="InterPro" id="IPR011263">
    <property type="entry name" value="DNA-dir_RNA_pol_RpoA/D/Rpb3"/>
</dbReference>
<dbReference type="InterPro" id="IPR011773">
    <property type="entry name" value="DNA-dir_RpoA"/>
</dbReference>
<dbReference type="InterPro" id="IPR036603">
    <property type="entry name" value="RBP11-like"/>
</dbReference>
<dbReference type="InterPro" id="IPR011260">
    <property type="entry name" value="RNAP_asu_C"/>
</dbReference>
<dbReference type="InterPro" id="IPR036643">
    <property type="entry name" value="RNApol_insert_sf"/>
</dbReference>
<dbReference type="NCBIfam" id="NF003513">
    <property type="entry name" value="PRK05182.1-2"/>
    <property type="match status" value="1"/>
</dbReference>
<dbReference type="NCBIfam" id="NF003515">
    <property type="entry name" value="PRK05182.2-1"/>
    <property type="match status" value="1"/>
</dbReference>
<dbReference type="NCBIfam" id="NF003519">
    <property type="entry name" value="PRK05182.2-5"/>
    <property type="match status" value="1"/>
</dbReference>
<dbReference type="NCBIfam" id="TIGR02027">
    <property type="entry name" value="rpoA"/>
    <property type="match status" value="1"/>
</dbReference>
<dbReference type="Pfam" id="PF01000">
    <property type="entry name" value="RNA_pol_A_bac"/>
    <property type="match status" value="1"/>
</dbReference>
<dbReference type="Pfam" id="PF03118">
    <property type="entry name" value="RNA_pol_A_CTD"/>
    <property type="match status" value="1"/>
</dbReference>
<dbReference type="Pfam" id="PF01193">
    <property type="entry name" value="RNA_pol_L"/>
    <property type="match status" value="1"/>
</dbReference>
<dbReference type="SMART" id="SM00662">
    <property type="entry name" value="RPOLD"/>
    <property type="match status" value="1"/>
</dbReference>
<dbReference type="SUPFAM" id="SSF47789">
    <property type="entry name" value="C-terminal domain of RNA polymerase alpha subunit"/>
    <property type="match status" value="1"/>
</dbReference>
<dbReference type="SUPFAM" id="SSF56553">
    <property type="entry name" value="Insert subdomain of RNA polymerase alpha subunit"/>
    <property type="match status" value="1"/>
</dbReference>
<dbReference type="SUPFAM" id="SSF55257">
    <property type="entry name" value="RBP11-like subunits of RNA polymerase"/>
    <property type="match status" value="1"/>
</dbReference>
<comment type="function">
    <text evidence="1">DNA-dependent RNA polymerase catalyzes the transcription of DNA into RNA using the four ribonucleoside triphosphates as substrates.</text>
</comment>
<comment type="catalytic activity">
    <reaction evidence="1">
        <text>RNA(n) + a ribonucleoside 5'-triphosphate = RNA(n+1) + diphosphate</text>
        <dbReference type="Rhea" id="RHEA:21248"/>
        <dbReference type="Rhea" id="RHEA-COMP:14527"/>
        <dbReference type="Rhea" id="RHEA-COMP:17342"/>
        <dbReference type="ChEBI" id="CHEBI:33019"/>
        <dbReference type="ChEBI" id="CHEBI:61557"/>
        <dbReference type="ChEBI" id="CHEBI:140395"/>
        <dbReference type="EC" id="2.7.7.6"/>
    </reaction>
</comment>
<comment type="subunit">
    <text evidence="1">Homodimer. The RNAP catalytic core consists of 2 alpha, 1 beta, 1 beta' and 1 omega subunit. When a sigma factor is associated with the core the holoenzyme is formed, which can initiate transcription.</text>
</comment>
<comment type="domain">
    <text evidence="1">The N-terminal domain is essential for RNAP assembly and basal transcription, whereas the C-terminal domain is involved in interaction with transcriptional regulators and with upstream promoter elements.</text>
</comment>
<comment type="similarity">
    <text evidence="1">Belongs to the RNA polymerase alpha chain family.</text>
</comment>
<sequence>MIEIEKPRIETIEISEDAKFGKFVVEPLERGYGTTLGNSLRRILLSSLPGAAVKYIEIEGVLHEFSAVDNVVEDVSTIIMNIKQLALKIYSEEDKTLEIDVRDEGEVTASDITHDSDVEILNPELKIATVSKGGHLKIRLVANKGRGYALAEQNNTSDLPIGVIPVDSLYSPVERVNYTVENTRVGQSSDFDKLTLDVWTNGSITPQESVSLAAKIMTEHLNIFVGLTDEAQNAEIMIEKEEDQKEKVLEMSIEELDLSVRSYNCLKRAGINSVQELADKSEADMMKVRNLGRKSLEEVKYKLEDLGLGLRKED</sequence>
<accession>Q2FER5</accession>